<dbReference type="EMBL" id="AK027681">
    <property type="protein sequence ID" value="BAB55292.1"/>
    <property type="status" value="ALT_INIT"/>
    <property type="molecule type" value="mRNA"/>
</dbReference>
<dbReference type="EMBL" id="AK074755">
    <property type="protein sequence ID" value="BAC11183.1"/>
    <property type="status" value="ALT_INIT"/>
    <property type="molecule type" value="mRNA"/>
</dbReference>
<dbReference type="EMBL" id="AK304556">
    <property type="protein sequence ID" value="BAG65351.1"/>
    <property type="molecule type" value="mRNA"/>
</dbReference>
<dbReference type="EMBL" id="AC097641">
    <property type="status" value="NOT_ANNOTATED_CDS"/>
    <property type="molecule type" value="Genomic_DNA"/>
</dbReference>
<dbReference type="EMBL" id="CH471099">
    <property type="protein sequence ID" value="EAW89116.1"/>
    <property type="molecule type" value="Genomic_DNA"/>
</dbReference>
<dbReference type="EMBL" id="BC011054">
    <property type="protein sequence ID" value="AAH11054.1"/>
    <property type="status" value="ALT_INIT"/>
    <property type="molecule type" value="mRNA"/>
</dbReference>
<dbReference type="EMBL" id="BC025238">
    <property type="protein sequence ID" value="AAH25238.1"/>
    <property type="status" value="ALT_INIT"/>
    <property type="molecule type" value="mRNA"/>
</dbReference>
<dbReference type="EMBL" id="U92989">
    <property type="status" value="NOT_ANNOTATED_CDS"/>
    <property type="molecule type" value="mRNA"/>
</dbReference>
<dbReference type="CCDS" id="CCDS11693.2">
    <molecule id="Q969W3-1"/>
</dbReference>
<dbReference type="CCDS" id="CCDS45766.1">
    <molecule id="Q969W3-2"/>
</dbReference>
<dbReference type="RefSeq" id="NP_001092302.1">
    <molecule id="Q969W3-2"/>
    <property type="nucleotide sequence ID" value="NM_001098832.2"/>
</dbReference>
<dbReference type="RefSeq" id="NP_001276339.1">
    <property type="nucleotide sequence ID" value="NM_001289410.1"/>
</dbReference>
<dbReference type="RefSeq" id="NP_001276340.1">
    <property type="nucleotide sequence ID" value="NM_001289411.1"/>
</dbReference>
<dbReference type="RefSeq" id="NP_001276341.1">
    <property type="nucleotide sequence ID" value="NM_001289412.1"/>
</dbReference>
<dbReference type="RefSeq" id="NP_116226.2">
    <molecule id="Q969W3-1"/>
    <property type="nucleotide sequence ID" value="NM_032837.3"/>
</dbReference>
<dbReference type="BioGRID" id="124358">
    <property type="interactions" value="7"/>
</dbReference>
<dbReference type="FunCoup" id="Q969W3">
    <property type="interactions" value="1420"/>
</dbReference>
<dbReference type="IntAct" id="Q969W3">
    <property type="interactions" value="7"/>
</dbReference>
<dbReference type="STRING" id="9606.ENSP00000384832"/>
<dbReference type="GlyGen" id="Q969W3">
    <property type="glycosylation" value="1 site"/>
</dbReference>
<dbReference type="iPTMnet" id="Q969W3"/>
<dbReference type="PhosphoSitePlus" id="Q969W3"/>
<dbReference type="BioMuta" id="FAM104A"/>
<dbReference type="DMDM" id="308153443"/>
<dbReference type="jPOST" id="Q969W3"/>
<dbReference type="MassIVE" id="Q969W3"/>
<dbReference type="PeptideAtlas" id="Q969W3"/>
<dbReference type="ProteomicsDB" id="75860">
    <molecule id="Q969W3-1"/>
</dbReference>
<dbReference type="ProteomicsDB" id="75861">
    <molecule id="Q969W3-2"/>
</dbReference>
<dbReference type="Pumba" id="Q969W3"/>
<dbReference type="Antibodypedia" id="19372">
    <property type="antibodies" value="5 antibodies from 5 providers"/>
</dbReference>
<dbReference type="DNASU" id="84923"/>
<dbReference type="Ensembl" id="ENST00000403627.7">
    <molecule id="Q969W3-1"/>
    <property type="protein sequence ID" value="ENSP00000384648.3"/>
    <property type="gene ID" value="ENSG00000133193.13"/>
</dbReference>
<dbReference type="Ensembl" id="ENST00000405159.8">
    <molecule id="Q969W3-2"/>
    <property type="protein sequence ID" value="ENSP00000384832.3"/>
    <property type="gene ID" value="ENSG00000133193.13"/>
</dbReference>
<dbReference type="GeneID" id="84923"/>
<dbReference type="KEGG" id="hsa:84923"/>
<dbReference type="MANE-Select" id="ENST00000405159.8">
    <molecule id="Q969W3-2"/>
    <property type="protein sequence ID" value="ENSP00000384832.3"/>
    <property type="RefSeq nucleotide sequence ID" value="NM_001098832.2"/>
    <property type="RefSeq protein sequence ID" value="NP_001092302.1"/>
</dbReference>
<dbReference type="UCSC" id="uc002jji.5">
    <molecule id="Q969W3-1"/>
    <property type="organism name" value="human"/>
</dbReference>
<dbReference type="AGR" id="HGNC:25918"/>
<dbReference type="CTD" id="84923"/>
<dbReference type="DisGeNET" id="84923"/>
<dbReference type="GeneCards" id="VCF1"/>
<dbReference type="HGNC" id="HGNC:25918">
    <property type="gene designation" value="VCF1"/>
</dbReference>
<dbReference type="HPA" id="ENSG00000133193">
    <property type="expression patterns" value="Tissue enhanced (testis)"/>
</dbReference>
<dbReference type="MIM" id="621109">
    <property type="type" value="gene"/>
</dbReference>
<dbReference type="neXtProt" id="NX_Q969W3"/>
<dbReference type="OpenTargets" id="ENSG00000133193"/>
<dbReference type="PharmGKB" id="PA142671787"/>
<dbReference type="VEuPathDB" id="HostDB:ENSG00000133193"/>
<dbReference type="GeneTree" id="ENSGT00940000163640"/>
<dbReference type="HOGENOM" id="CLU_117251_0_0_1"/>
<dbReference type="InParanoid" id="Q969W3"/>
<dbReference type="OMA" id="PVTKNCK"/>
<dbReference type="OrthoDB" id="9939148at2759"/>
<dbReference type="PAN-GO" id="Q969W3">
    <property type="GO annotations" value="0 GO annotations based on evolutionary models"/>
</dbReference>
<dbReference type="PhylomeDB" id="Q969W3"/>
<dbReference type="TreeFam" id="TF335777"/>
<dbReference type="PathwayCommons" id="Q969W3"/>
<dbReference type="SignaLink" id="Q969W3"/>
<dbReference type="BioGRID-ORCS" id="84923">
    <property type="hits" value="28 hits in 1166 CRISPR screens"/>
</dbReference>
<dbReference type="ChiTaRS" id="FAM104A">
    <property type="organism name" value="human"/>
</dbReference>
<dbReference type="GenomeRNAi" id="84923"/>
<dbReference type="Pharos" id="Q969W3">
    <property type="development level" value="Tdark"/>
</dbReference>
<dbReference type="PRO" id="PR:Q969W3"/>
<dbReference type="Proteomes" id="UP000005640">
    <property type="component" value="Chromosome 17"/>
</dbReference>
<dbReference type="RNAct" id="Q969W3">
    <property type="molecule type" value="protein"/>
</dbReference>
<dbReference type="Bgee" id="ENSG00000133193">
    <property type="expression patterns" value="Expressed in sperm and 188 other cell types or tissues"/>
</dbReference>
<dbReference type="ExpressionAtlas" id="Q969W3">
    <property type="expression patterns" value="baseline and differential"/>
</dbReference>
<dbReference type="InterPro" id="IPR029222">
    <property type="entry name" value="VCF1/2-like"/>
</dbReference>
<dbReference type="PANTHER" id="PTHR34763">
    <property type="entry name" value="PROTEIN FAM104A"/>
    <property type="match status" value="1"/>
</dbReference>
<dbReference type="PANTHER" id="PTHR34763:SF1">
    <property type="entry name" value="PROTEIN FAM104A"/>
    <property type="match status" value="1"/>
</dbReference>
<dbReference type="Pfam" id="PF15434">
    <property type="entry name" value="FAM104"/>
    <property type="match status" value="1"/>
</dbReference>
<evidence type="ECO:0000256" key="1">
    <source>
        <dbReference type="SAM" id="MobiDB-lite"/>
    </source>
</evidence>
<evidence type="ECO:0000303" key="2">
    <source>
    </source>
</evidence>
<evidence type="ECO:0000305" key="3"/>
<evidence type="ECO:0000312" key="4">
    <source>
        <dbReference type="HGNC" id="HGNC:25918"/>
    </source>
</evidence>
<evidence type="ECO:0007744" key="5">
    <source>
    </source>
</evidence>
<proteinExistence type="evidence at protein level"/>
<reference key="1">
    <citation type="journal article" date="2004" name="Nat. Genet.">
        <title>Complete sequencing and characterization of 21,243 full-length human cDNAs.</title>
        <authorList>
            <person name="Ota T."/>
            <person name="Suzuki Y."/>
            <person name="Nishikawa T."/>
            <person name="Otsuki T."/>
            <person name="Sugiyama T."/>
            <person name="Irie R."/>
            <person name="Wakamatsu A."/>
            <person name="Hayashi K."/>
            <person name="Sato H."/>
            <person name="Nagai K."/>
            <person name="Kimura K."/>
            <person name="Makita H."/>
            <person name="Sekine M."/>
            <person name="Obayashi M."/>
            <person name="Nishi T."/>
            <person name="Shibahara T."/>
            <person name="Tanaka T."/>
            <person name="Ishii S."/>
            <person name="Yamamoto J."/>
            <person name="Saito K."/>
            <person name="Kawai Y."/>
            <person name="Isono Y."/>
            <person name="Nakamura Y."/>
            <person name="Nagahari K."/>
            <person name="Murakami K."/>
            <person name="Yasuda T."/>
            <person name="Iwayanagi T."/>
            <person name="Wagatsuma M."/>
            <person name="Shiratori A."/>
            <person name="Sudo H."/>
            <person name="Hosoiri T."/>
            <person name="Kaku Y."/>
            <person name="Kodaira H."/>
            <person name="Kondo H."/>
            <person name="Sugawara M."/>
            <person name="Takahashi M."/>
            <person name="Kanda K."/>
            <person name="Yokoi T."/>
            <person name="Furuya T."/>
            <person name="Kikkawa E."/>
            <person name="Omura Y."/>
            <person name="Abe K."/>
            <person name="Kamihara K."/>
            <person name="Katsuta N."/>
            <person name="Sato K."/>
            <person name="Tanikawa M."/>
            <person name="Yamazaki M."/>
            <person name="Ninomiya K."/>
            <person name="Ishibashi T."/>
            <person name="Yamashita H."/>
            <person name="Murakawa K."/>
            <person name="Fujimori K."/>
            <person name="Tanai H."/>
            <person name="Kimata M."/>
            <person name="Watanabe M."/>
            <person name="Hiraoka S."/>
            <person name="Chiba Y."/>
            <person name="Ishida S."/>
            <person name="Ono Y."/>
            <person name="Takiguchi S."/>
            <person name="Watanabe S."/>
            <person name="Yosida M."/>
            <person name="Hotuta T."/>
            <person name="Kusano J."/>
            <person name="Kanehori K."/>
            <person name="Takahashi-Fujii A."/>
            <person name="Hara H."/>
            <person name="Tanase T.-O."/>
            <person name="Nomura Y."/>
            <person name="Togiya S."/>
            <person name="Komai F."/>
            <person name="Hara R."/>
            <person name="Takeuchi K."/>
            <person name="Arita M."/>
            <person name="Imose N."/>
            <person name="Musashino K."/>
            <person name="Yuuki H."/>
            <person name="Oshima A."/>
            <person name="Sasaki N."/>
            <person name="Aotsuka S."/>
            <person name="Yoshikawa Y."/>
            <person name="Matsunawa H."/>
            <person name="Ichihara T."/>
            <person name="Shiohata N."/>
            <person name="Sano S."/>
            <person name="Moriya S."/>
            <person name="Momiyama H."/>
            <person name="Satoh N."/>
            <person name="Takami S."/>
            <person name="Terashima Y."/>
            <person name="Suzuki O."/>
            <person name="Nakagawa S."/>
            <person name="Senoh A."/>
            <person name="Mizoguchi H."/>
            <person name="Goto Y."/>
            <person name="Shimizu F."/>
            <person name="Wakebe H."/>
            <person name="Hishigaki H."/>
            <person name="Watanabe T."/>
            <person name="Sugiyama A."/>
            <person name="Takemoto M."/>
            <person name="Kawakami B."/>
            <person name="Yamazaki M."/>
            <person name="Watanabe K."/>
            <person name="Kumagai A."/>
            <person name="Itakura S."/>
            <person name="Fukuzumi Y."/>
            <person name="Fujimori Y."/>
            <person name="Komiyama M."/>
            <person name="Tashiro H."/>
            <person name="Tanigami A."/>
            <person name="Fujiwara T."/>
            <person name="Ono T."/>
            <person name="Yamada K."/>
            <person name="Fujii Y."/>
            <person name="Ozaki K."/>
            <person name="Hirao M."/>
            <person name="Ohmori Y."/>
            <person name="Kawabata A."/>
            <person name="Hikiji T."/>
            <person name="Kobatake N."/>
            <person name="Inagaki H."/>
            <person name="Ikema Y."/>
            <person name="Okamoto S."/>
            <person name="Okitani R."/>
            <person name="Kawakami T."/>
            <person name="Noguchi S."/>
            <person name="Itoh T."/>
            <person name="Shigeta K."/>
            <person name="Senba T."/>
            <person name="Matsumura K."/>
            <person name="Nakajima Y."/>
            <person name="Mizuno T."/>
            <person name="Morinaga M."/>
            <person name="Sasaki M."/>
            <person name="Togashi T."/>
            <person name="Oyama M."/>
            <person name="Hata H."/>
            <person name="Watanabe M."/>
            <person name="Komatsu T."/>
            <person name="Mizushima-Sugano J."/>
            <person name="Satoh T."/>
            <person name="Shirai Y."/>
            <person name="Takahashi Y."/>
            <person name="Nakagawa K."/>
            <person name="Okumura K."/>
            <person name="Nagase T."/>
            <person name="Nomura N."/>
            <person name="Kikuchi H."/>
            <person name="Masuho Y."/>
            <person name="Yamashita R."/>
            <person name="Nakai K."/>
            <person name="Yada T."/>
            <person name="Nakamura Y."/>
            <person name="Ohara O."/>
            <person name="Isogai T."/>
            <person name="Sugano S."/>
        </authorList>
    </citation>
    <scope>NUCLEOTIDE SEQUENCE [LARGE SCALE MRNA] (ISOFORM 1)</scope>
    <source>
        <tissue>Teratocarcinoma</tissue>
        <tissue>Uterus</tissue>
    </source>
</reference>
<reference key="2">
    <citation type="journal article" date="2006" name="Nature">
        <title>DNA sequence of human chromosome 17 and analysis of rearrangement in the human lineage.</title>
        <authorList>
            <person name="Zody M.C."/>
            <person name="Garber M."/>
            <person name="Adams D.J."/>
            <person name="Sharpe T."/>
            <person name="Harrow J."/>
            <person name="Lupski J.R."/>
            <person name="Nicholson C."/>
            <person name="Searle S.M."/>
            <person name="Wilming L."/>
            <person name="Young S.K."/>
            <person name="Abouelleil A."/>
            <person name="Allen N.R."/>
            <person name="Bi W."/>
            <person name="Bloom T."/>
            <person name="Borowsky M.L."/>
            <person name="Bugalter B.E."/>
            <person name="Butler J."/>
            <person name="Chang J.L."/>
            <person name="Chen C.-K."/>
            <person name="Cook A."/>
            <person name="Corum B."/>
            <person name="Cuomo C.A."/>
            <person name="de Jong P.J."/>
            <person name="DeCaprio D."/>
            <person name="Dewar K."/>
            <person name="FitzGerald M."/>
            <person name="Gilbert J."/>
            <person name="Gibson R."/>
            <person name="Gnerre S."/>
            <person name="Goldstein S."/>
            <person name="Grafham D.V."/>
            <person name="Grocock R."/>
            <person name="Hafez N."/>
            <person name="Hagopian D.S."/>
            <person name="Hart E."/>
            <person name="Norman C.H."/>
            <person name="Humphray S."/>
            <person name="Jaffe D.B."/>
            <person name="Jones M."/>
            <person name="Kamal M."/>
            <person name="Khodiyar V.K."/>
            <person name="LaButti K."/>
            <person name="Laird G."/>
            <person name="Lehoczky J."/>
            <person name="Liu X."/>
            <person name="Lokyitsang T."/>
            <person name="Loveland J."/>
            <person name="Lui A."/>
            <person name="Macdonald P."/>
            <person name="Major J.E."/>
            <person name="Matthews L."/>
            <person name="Mauceli E."/>
            <person name="McCarroll S.A."/>
            <person name="Mihalev A.H."/>
            <person name="Mudge J."/>
            <person name="Nguyen C."/>
            <person name="Nicol R."/>
            <person name="O'Leary S.B."/>
            <person name="Osoegawa K."/>
            <person name="Schwartz D.C."/>
            <person name="Shaw-Smith C."/>
            <person name="Stankiewicz P."/>
            <person name="Steward C."/>
            <person name="Swarbreck D."/>
            <person name="Venkataraman V."/>
            <person name="Whittaker C.A."/>
            <person name="Yang X."/>
            <person name="Zimmer A.R."/>
            <person name="Bradley A."/>
            <person name="Hubbard T."/>
            <person name="Birren B.W."/>
            <person name="Rogers J."/>
            <person name="Lander E.S."/>
            <person name="Nusbaum C."/>
        </authorList>
    </citation>
    <scope>NUCLEOTIDE SEQUENCE [LARGE SCALE GENOMIC DNA]</scope>
</reference>
<reference key="3">
    <citation type="submission" date="2005-07" db="EMBL/GenBank/DDBJ databases">
        <authorList>
            <person name="Mural R.J."/>
            <person name="Istrail S."/>
            <person name="Sutton G.G."/>
            <person name="Florea L."/>
            <person name="Halpern A.L."/>
            <person name="Mobarry C.M."/>
            <person name="Lippert R."/>
            <person name="Walenz B."/>
            <person name="Shatkay H."/>
            <person name="Dew I."/>
            <person name="Miller J.R."/>
            <person name="Flanigan M.J."/>
            <person name="Edwards N.J."/>
            <person name="Bolanos R."/>
            <person name="Fasulo D."/>
            <person name="Halldorsson B.V."/>
            <person name="Hannenhalli S."/>
            <person name="Turner R."/>
            <person name="Yooseph S."/>
            <person name="Lu F."/>
            <person name="Nusskern D.R."/>
            <person name="Shue B.C."/>
            <person name="Zheng X.H."/>
            <person name="Zhong F."/>
            <person name="Delcher A.L."/>
            <person name="Huson D.H."/>
            <person name="Kravitz S.A."/>
            <person name="Mouchard L."/>
            <person name="Reinert K."/>
            <person name="Remington K.A."/>
            <person name="Clark A.G."/>
            <person name="Waterman M.S."/>
            <person name="Eichler E.E."/>
            <person name="Adams M.D."/>
            <person name="Hunkapiller M.W."/>
            <person name="Myers E.W."/>
            <person name="Venter J.C."/>
        </authorList>
    </citation>
    <scope>NUCLEOTIDE SEQUENCE [LARGE SCALE GENOMIC DNA]</scope>
</reference>
<reference key="4">
    <citation type="journal article" date="2004" name="Genome Res.">
        <title>The status, quality, and expansion of the NIH full-length cDNA project: the Mammalian Gene Collection (MGC).</title>
        <authorList>
            <consortium name="The MGC Project Team"/>
        </authorList>
    </citation>
    <scope>NUCLEOTIDE SEQUENCE [LARGE SCALE MRNA] OF 51-186 (ISOFORM 1)</scope>
    <source>
        <tissue>Brain</tissue>
        <tissue>Rhabdomyosarcoma</tissue>
    </source>
</reference>
<reference key="5">
    <citation type="journal article" date="1997" name="Genomics">
        <title>Mapping and characterization of novel (CAG)n repeat cDNAs from adult human brain derived by the oligo capture method.</title>
        <authorList>
            <person name="Reddy P.H."/>
            <person name="Stockburger E."/>
            <person name="Gillevet P."/>
            <person name="Tagle D.A."/>
        </authorList>
    </citation>
    <scope>NUCLEOTIDE SEQUENCE [MRNA] OF 57-186 (ISOFORM 2)</scope>
</reference>
<reference key="6">
    <citation type="journal article" date="2014" name="Mol. Cell. Proteomics">
        <title>Immunoaffinity enrichment and mass spectrometry analysis of protein methylation.</title>
        <authorList>
            <person name="Guo A."/>
            <person name="Gu H."/>
            <person name="Zhou J."/>
            <person name="Mulhern D."/>
            <person name="Wang Y."/>
            <person name="Lee K.A."/>
            <person name="Yang V."/>
            <person name="Aguiar M."/>
            <person name="Kornhauser J."/>
            <person name="Jia X."/>
            <person name="Ren J."/>
            <person name="Beausoleil S.A."/>
            <person name="Silva J.C."/>
            <person name="Vemulapalli V."/>
            <person name="Bedford M.T."/>
            <person name="Comb M.J."/>
        </authorList>
    </citation>
    <scope>METHYLATION [LARGE SCALE ANALYSIS] AT ARG-4</scope>
    <scope>IDENTIFICATION BY MASS SPECTROMETRY [LARGE SCALE ANALYSIS]</scope>
    <source>
        <tissue>Colon carcinoma</tissue>
    </source>
</reference>
<name>VCF1_HUMAN</name>
<accession>Q969W3</accession>
<accession>B4E339</accession>
<keyword id="KW-0025">Alternative splicing</keyword>
<keyword id="KW-0488">Methylation</keyword>
<keyword id="KW-1267">Proteomics identification</keyword>
<keyword id="KW-1185">Reference proteome</keyword>
<gene>
    <name evidence="4" type="primary">VCF1</name>
    <name type="synonym">FAM104A</name>
</gene>
<feature type="chain" id="PRO_0000236182" description="Protein VCF1">
    <location>
        <begin position="1"/>
        <end position="186"/>
    </location>
</feature>
<feature type="region of interest" description="Disordered" evidence="1">
    <location>
        <begin position="1"/>
        <end position="156"/>
    </location>
</feature>
<feature type="compositionally biased region" description="Gly residues" evidence="1">
    <location>
        <begin position="1"/>
        <end position="16"/>
    </location>
</feature>
<feature type="compositionally biased region" description="Basic residues" evidence="1">
    <location>
        <begin position="31"/>
        <end position="43"/>
    </location>
</feature>
<feature type="compositionally biased region" description="Low complexity" evidence="1">
    <location>
        <begin position="108"/>
        <end position="123"/>
    </location>
</feature>
<feature type="compositionally biased region" description="Polar residues" evidence="1">
    <location>
        <begin position="136"/>
        <end position="147"/>
    </location>
</feature>
<feature type="modified residue" description="Omega-N-methylarginine" evidence="5">
    <location>
        <position position="4"/>
    </location>
</feature>
<feature type="splice variant" id="VSP_039868" description="In isoform 2." evidence="2">
    <original>E</original>
    <variation>ETVPVMRNSKENRLRGNKAFCA</variation>
    <location>
        <position position="107"/>
    </location>
</feature>
<sequence>MGGRGADAGSSGGTGPTEGYSPPAASTRAAARAKARGGGRGGRRNTTPSVPSLRGAAPRSFHPPAAMSERLRPRKRRRNGNEEDNHLPPQTKRSSRNPVFQDSWDTESSGSDSGGSSSSSSSSINSPDRASGPEGSLSQTMAGSSPNTPQPVPEQSALCQGLYFHINQTLREAHFHSLQHRGRPLT</sequence>
<protein>
    <recommendedName>
        <fullName>Protein VCF1</fullName>
    </recommendedName>
    <alternativeName>
        <fullName evidence="4">VCP nuclear cofactor family member 1</fullName>
    </alternativeName>
</protein>
<organism>
    <name type="scientific">Homo sapiens</name>
    <name type="common">Human</name>
    <dbReference type="NCBI Taxonomy" id="9606"/>
    <lineage>
        <taxon>Eukaryota</taxon>
        <taxon>Metazoa</taxon>
        <taxon>Chordata</taxon>
        <taxon>Craniata</taxon>
        <taxon>Vertebrata</taxon>
        <taxon>Euteleostomi</taxon>
        <taxon>Mammalia</taxon>
        <taxon>Eutheria</taxon>
        <taxon>Euarchontoglires</taxon>
        <taxon>Primates</taxon>
        <taxon>Haplorrhini</taxon>
        <taxon>Catarrhini</taxon>
        <taxon>Hominidae</taxon>
        <taxon>Homo</taxon>
    </lineage>
</organism>
<comment type="interaction">
    <interactant intactId="EBI-10281506">
        <id>Q969W3</id>
    </interactant>
    <interactant intactId="EBI-476586">
        <id>P17612</id>
        <label>PRKACA</label>
    </interactant>
    <organismsDiffer>false</organismsDiffer>
    <experiments>3</experiments>
</comment>
<comment type="interaction">
    <interactant intactId="EBI-10281506">
        <id>Q969W3</id>
    </interactant>
    <interactant intactId="EBI-350723">
        <id>P50454</id>
        <label>SERPINH1</label>
    </interactant>
    <organismsDiffer>false</organismsDiffer>
    <experiments>3</experiments>
</comment>
<comment type="interaction">
    <interactant intactId="EBI-10281506">
        <id>Q969W3</id>
    </interactant>
    <interactant intactId="EBI-296151">
        <id>P37173</id>
        <label>TGFBR2</label>
    </interactant>
    <organismsDiffer>false</organismsDiffer>
    <experiments>3</experiments>
</comment>
<comment type="interaction">
    <interactant intactId="EBI-10281506">
        <id>Q969W3</id>
    </interactant>
    <interactant intactId="EBI-1993619">
        <id>Q14CS0</id>
        <label>UBXN2B</label>
    </interactant>
    <organismsDiffer>false</organismsDiffer>
    <experiments>4</experiments>
</comment>
<comment type="interaction">
    <interactant intactId="EBI-10281506">
        <id>Q969W3</id>
    </interactant>
    <interactant intactId="EBI-355164">
        <id>P55072</id>
        <label>VCP</label>
    </interactant>
    <organismsDiffer>false</organismsDiffer>
    <experiments>10</experiments>
</comment>
<comment type="alternative products">
    <event type="alternative splicing"/>
    <isoform>
        <id>Q969W3-1</id>
        <name>1</name>
        <sequence type="displayed"/>
    </isoform>
    <isoform>
        <id>Q969W3-2</id>
        <name>2</name>
        <sequence type="described" ref="VSP_039868"/>
    </isoform>
</comment>
<comment type="similarity">
    <text evidence="3">Belongs to the VCF family.</text>
</comment>
<comment type="sequence caution" evidence="3">
    <conflict type="erroneous initiation">
        <sequence resource="EMBL-CDS" id="AAH11054"/>
    </conflict>
    <text>Truncated N-terminus.</text>
</comment>
<comment type="sequence caution" evidence="3">
    <conflict type="erroneous initiation">
        <sequence resource="EMBL-CDS" id="AAH25238"/>
    </conflict>
    <text>Truncated N-terminus.</text>
</comment>
<comment type="sequence caution" evidence="3">
    <conflict type="erroneous initiation">
        <sequence resource="EMBL-CDS" id="BAB55292"/>
    </conflict>
    <text>Truncated N-terminus.</text>
</comment>
<comment type="sequence caution" evidence="3">
    <conflict type="erroneous initiation">
        <sequence resource="EMBL-CDS" id="BAC11183"/>
    </conflict>
    <text>Truncated N-terminus.</text>
</comment>